<gene>
    <name type="primary">cct5</name>
    <name type="ORF">DDB_G0281849</name>
</gene>
<proteinExistence type="inferred from homology"/>
<feature type="chain" id="PRO_0000327897" description="T-complex protein 1 subunit epsilon">
    <location>
        <begin position="1"/>
        <end position="538"/>
    </location>
</feature>
<keyword id="KW-0067">ATP-binding</keyword>
<keyword id="KW-0143">Chaperone</keyword>
<keyword id="KW-0963">Cytoplasm</keyword>
<keyword id="KW-0547">Nucleotide-binding</keyword>
<keyword id="KW-1185">Reference proteome</keyword>
<organism>
    <name type="scientific">Dictyostelium discoideum</name>
    <name type="common">Social amoeba</name>
    <dbReference type="NCBI Taxonomy" id="44689"/>
    <lineage>
        <taxon>Eukaryota</taxon>
        <taxon>Amoebozoa</taxon>
        <taxon>Evosea</taxon>
        <taxon>Eumycetozoa</taxon>
        <taxon>Dictyostelia</taxon>
        <taxon>Dictyosteliales</taxon>
        <taxon>Dictyosteliaceae</taxon>
        <taxon>Dictyostelium</taxon>
    </lineage>
</organism>
<dbReference type="EMBL" id="AAFI02000043">
    <property type="protein sequence ID" value="EAL66484.1"/>
    <property type="molecule type" value="Genomic_DNA"/>
</dbReference>
<dbReference type="RefSeq" id="XP_640456.1">
    <property type="nucleotide sequence ID" value="XM_635364.1"/>
</dbReference>
<dbReference type="SMR" id="Q54TD3"/>
<dbReference type="FunCoup" id="Q54TD3">
    <property type="interactions" value="951"/>
</dbReference>
<dbReference type="STRING" id="44689.Q54TD3"/>
<dbReference type="PaxDb" id="44689-DDB0233994"/>
<dbReference type="EnsemblProtists" id="EAL66484">
    <property type="protein sequence ID" value="EAL66484"/>
    <property type="gene ID" value="DDB_G0281849"/>
</dbReference>
<dbReference type="GeneID" id="8623269"/>
<dbReference type="KEGG" id="ddi:DDB_G0281849"/>
<dbReference type="dictyBase" id="DDB_G0281849">
    <property type="gene designation" value="cct5"/>
</dbReference>
<dbReference type="VEuPathDB" id="AmoebaDB:DDB_G0281849"/>
<dbReference type="eggNOG" id="KOG0357">
    <property type="taxonomic scope" value="Eukaryota"/>
</dbReference>
<dbReference type="HOGENOM" id="CLU_008891_7_2_1"/>
<dbReference type="InParanoid" id="Q54TD3"/>
<dbReference type="OMA" id="SHPQMPH"/>
<dbReference type="PhylomeDB" id="Q54TD3"/>
<dbReference type="BRENDA" id="3.6.4.B10">
    <property type="organism ID" value="1939"/>
</dbReference>
<dbReference type="Reactome" id="R-DDI-390471">
    <property type="pathway name" value="Association of TriC/CCT with target proteins during biosynthesis"/>
</dbReference>
<dbReference type="Reactome" id="R-DDI-6814122">
    <property type="pathway name" value="Cooperation of PDCL (PhLP1) and TRiC/CCT in G-protein beta folding"/>
</dbReference>
<dbReference type="PRO" id="PR:Q54TD3"/>
<dbReference type="Proteomes" id="UP000002195">
    <property type="component" value="Chromosome 3"/>
</dbReference>
<dbReference type="GO" id="GO:0005832">
    <property type="term" value="C:chaperonin-containing T-complex"/>
    <property type="evidence" value="ECO:0000250"/>
    <property type="project" value="dictyBase"/>
</dbReference>
<dbReference type="GO" id="GO:0005524">
    <property type="term" value="F:ATP binding"/>
    <property type="evidence" value="ECO:0007669"/>
    <property type="project" value="UniProtKB-KW"/>
</dbReference>
<dbReference type="GO" id="GO:0016887">
    <property type="term" value="F:ATP hydrolysis activity"/>
    <property type="evidence" value="ECO:0007669"/>
    <property type="project" value="InterPro"/>
</dbReference>
<dbReference type="GO" id="GO:0140662">
    <property type="term" value="F:ATP-dependent protein folding chaperone"/>
    <property type="evidence" value="ECO:0007669"/>
    <property type="project" value="InterPro"/>
</dbReference>
<dbReference type="GO" id="GO:0051082">
    <property type="term" value="F:unfolded protein binding"/>
    <property type="evidence" value="ECO:0000250"/>
    <property type="project" value="dictyBase"/>
</dbReference>
<dbReference type="GO" id="GO:0006457">
    <property type="term" value="P:protein folding"/>
    <property type="evidence" value="ECO:0000250"/>
    <property type="project" value="dictyBase"/>
</dbReference>
<dbReference type="CDD" id="cd03339">
    <property type="entry name" value="TCP1_epsilon"/>
    <property type="match status" value="1"/>
</dbReference>
<dbReference type="FunFam" id="1.10.560.10:FF:000053">
    <property type="entry name" value="T-complex protein 1 subunit delta"/>
    <property type="match status" value="1"/>
</dbReference>
<dbReference type="FunFam" id="3.50.7.10:FF:000003">
    <property type="entry name" value="T-complex protein 1 subunit epsilon"/>
    <property type="match status" value="1"/>
</dbReference>
<dbReference type="FunFam" id="1.10.560.10:FF:000049">
    <property type="entry name" value="T-complex protein 1 subunitTheta, putative"/>
    <property type="match status" value="1"/>
</dbReference>
<dbReference type="Gene3D" id="3.50.7.10">
    <property type="entry name" value="GroEL"/>
    <property type="match status" value="1"/>
</dbReference>
<dbReference type="Gene3D" id="1.10.560.10">
    <property type="entry name" value="GroEL-like equatorial domain"/>
    <property type="match status" value="1"/>
</dbReference>
<dbReference type="Gene3D" id="3.30.260.10">
    <property type="entry name" value="TCP-1-like chaperonin intermediate domain"/>
    <property type="match status" value="1"/>
</dbReference>
<dbReference type="InterPro" id="IPR012718">
    <property type="entry name" value="Chap_CCT_epsi"/>
</dbReference>
<dbReference type="InterPro" id="IPR017998">
    <property type="entry name" value="Chaperone_TCP-1"/>
</dbReference>
<dbReference type="InterPro" id="IPR002194">
    <property type="entry name" value="Chaperonin_TCP-1_CS"/>
</dbReference>
<dbReference type="InterPro" id="IPR002423">
    <property type="entry name" value="Cpn60/GroEL/TCP-1"/>
</dbReference>
<dbReference type="InterPro" id="IPR027409">
    <property type="entry name" value="GroEL-like_apical_dom_sf"/>
</dbReference>
<dbReference type="InterPro" id="IPR027413">
    <property type="entry name" value="GROEL-like_equatorial_sf"/>
</dbReference>
<dbReference type="InterPro" id="IPR027410">
    <property type="entry name" value="TCP-1-like_intermed_sf"/>
</dbReference>
<dbReference type="InterPro" id="IPR053374">
    <property type="entry name" value="TCP-1_chaperonin"/>
</dbReference>
<dbReference type="InterPro" id="IPR054827">
    <property type="entry name" value="thermosome_alpha"/>
</dbReference>
<dbReference type="NCBIfam" id="TIGR02343">
    <property type="entry name" value="chap_CCT_epsi"/>
    <property type="match status" value="1"/>
</dbReference>
<dbReference type="NCBIfam" id="NF041082">
    <property type="entry name" value="thermosome_alpha"/>
    <property type="match status" value="1"/>
</dbReference>
<dbReference type="NCBIfam" id="NF041083">
    <property type="entry name" value="thermosome_beta"/>
    <property type="match status" value="1"/>
</dbReference>
<dbReference type="PANTHER" id="PTHR11353">
    <property type="entry name" value="CHAPERONIN"/>
    <property type="match status" value="1"/>
</dbReference>
<dbReference type="Pfam" id="PF00118">
    <property type="entry name" value="Cpn60_TCP1"/>
    <property type="match status" value="1"/>
</dbReference>
<dbReference type="PRINTS" id="PR00304">
    <property type="entry name" value="TCOMPLEXTCP1"/>
</dbReference>
<dbReference type="SUPFAM" id="SSF52029">
    <property type="entry name" value="GroEL apical domain-like"/>
    <property type="match status" value="1"/>
</dbReference>
<dbReference type="SUPFAM" id="SSF48592">
    <property type="entry name" value="GroEL equatorial domain-like"/>
    <property type="match status" value="1"/>
</dbReference>
<dbReference type="SUPFAM" id="SSF54849">
    <property type="entry name" value="GroEL-intermediate domain like"/>
    <property type="match status" value="1"/>
</dbReference>
<dbReference type="PROSITE" id="PS00750">
    <property type="entry name" value="TCP1_1"/>
    <property type="match status" value="1"/>
</dbReference>
<dbReference type="PROSITE" id="PS00751">
    <property type="entry name" value="TCP1_2"/>
    <property type="match status" value="1"/>
</dbReference>
<dbReference type="PROSITE" id="PS00995">
    <property type="entry name" value="TCP1_3"/>
    <property type="match status" value="1"/>
</dbReference>
<name>TCPE_DICDI</name>
<accession>Q54TD3</accession>
<comment type="function">
    <text evidence="1">Molecular chaperone; assists the folding of proteins upon ATP hydrolysis. Known to play a role, in vitro, in the folding of actin and tubulin (By similarity).</text>
</comment>
<comment type="subunit">
    <text evidence="1">Heterooligomeric complex of about 850 to 900 kDa that forms two stacked rings, 12 to 16 nm in diameter.</text>
</comment>
<comment type="subcellular location">
    <subcellularLocation>
        <location evidence="1">Cytoplasm</location>
    </subcellularLocation>
</comment>
<comment type="similarity">
    <text evidence="2">Belongs to the TCP-1 chaperonin family.</text>
</comment>
<reference key="1">
    <citation type="journal article" date="2005" name="Nature">
        <title>The genome of the social amoeba Dictyostelium discoideum.</title>
        <authorList>
            <person name="Eichinger L."/>
            <person name="Pachebat J.A."/>
            <person name="Gloeckner G."/>
            <person name="Rajandream M.A."/>
            <person name="Sucgang R."/>
            <person name="Berriman M."/>
            <person name="Song J."/>
            <person name="Olsen R."/>
            <person name="Szafranski K."/>
            <person name="Xu Q."/>
            <person name="Tunggal B."/>
            <person name="Kummerfeld S."/>
            <person name="Madera M."/>
            <person name="Konfortov B.A."/>
            <person name="Rivero F."/>
            <person name="Bankier A.T."/>
            <person name="Lehmann R."/>
            <person name="Hamlin N."/>
            <person name="Davies R."/>
            <person name="Gaudet P."/>
            <person name="Fey P."/>
            <person name="Pilcher K."/>
            <person name="Chen G."/>
            <person name="Saunders D."/>
            <person name="Sodergren E.J."/>
            <person name="Davis P."/>
            <person name="Kerhornou A."/>
            <person name="Nie X."/>
            <person name="Hall N."/>
            <person name="Anjard C."/>
            <person name="Hemphill L."/>
            <person name="Bason N."/>
            <person name="Farbrother P."/>
            <person name="Desany B."/>
            <person name="Just E."/>
            <person name="Morio T."/>
            <person name="Rost R."/>
            <person name="Churcher C.M."/>
            <person name="Cooper J."/>
            <person name="Haydock S."/>
            <person name="van Driessche N."/>
            <person name="Cronin A."/>
            <person name="Goodhead I."/>
            <person name="Muzny D.M."/>
            <person name="Mourier T."/>
            <person name="Pain A."/>
            <person name="Lu M."/>
            <person name="Harper D."/>
            <person name="Lindsay R."/>
            <person name="Hauser H."/>
            <person name="James K.D."/>
            <person name="Quiles M."/>
            <person name="Madan Babu M."/>
            <person name="Saito T."/>
            <person name="Buchrieser C."/>
            <person name="Wardroper A."/>
            <person name="Felder M."/>
            <person name="Thangavelu M."/>
            <person name="Johnson D."/>
            <person name="Knights A."/>
            <person name="Loulseged H."/>
            <person name="Mungall K.L."/>
            <person name="Oliver K."/>
            <person name="Price C."/>
            <person name="Quail M.A."/>
            <person name="Urushihara H."/>
            <person name="Hernandez J."/>
            <person name="Rabbinowitsch E."/>
            <person name="Steffen D."/>
            <person name="Sanders M."/>
            <person name="Ma J."/>
            <person name="Kohara Y."/>
            <person name="Sharp S."/>
            <person name="Simmonds M.N."/>
            <person name="Spiegler S."/>
            <person name="Tivey A."/>
            <person name="Sugano S."/>
            <person name="White B."/>
            <person name="Walker D."/>
            <person name="Woodward J.R."/>
            <person name="Winckler T."/>
            <person name="Tanaka Y."/>
            <person name="Shaulsky G."/>
            <person name="Schleicher M."/>
            <person name="Weinstock G.M."/>
            <person name="Rosenthal A."/>
            <person name="Cox E.C."/>
            <person name="Chisholm R.L."/>
            <person name="Gibbs R.A."/>
            <person name="Loomis W.F."/>
            <person name="Platzer M."/>
            <person name="Kay R.R."/>
            <person name="Williams J.G."/>
            <person name="Dear P.H."/>
            <person name="Noegel A.A."/>
            <person name="Barrell B.G."/>
            <person name="Kuspa A."/>
        </authorList>
    </citation>
    <scope>NUCLEOTIDE SEQUENCE [LARGE SCALE GENOMIC DNA]</scope>
    <source>
        <strain>AX4</strain>
    </source>
</reference>
<sequence length="538" mass="59130">MSLVFDEYGNPFIVIRDQQAKERLRGIEAHRSHILAAKTISNIMKSSLGPKGMDKMMVSQDGEVLVTNDGATILENMQVDNQIAKLMVQLSKSQDDEIGDGTTGVVVLAGSLLEQAEQLIEKGIHPCRIYEGYETACKIATEHLKTISDSIEFSKDNIEPLIKTAMTCLGSKIVNRFHRQMSEIAVKAVISVADLERKDVNLENIKLEGKEGGKLEDTQLVKGIIIDKGISHPQMPKIIKDAKICLLTCPFEPPKPKTKNSIEITKAEDFKVLGEIEQKYFTDMVEKVKATGANLVICQWGFDDEANHLLLQNNLPAVRWVGGLDLEKIAMATGGRIVARFEDVSADKLGRAGLVREVGFGTTQDRYLSIEDCPNTNAVTIFVRGGNKMIVEEAKRSIHDALCVTRNLIRDNRVIYGGGSSEISCGLKISAMADDIASIEQYAVRAFADALDAIPLALAENSGLPSIESLSTVKAMQIKEKNPRLGIDCNHRDTNDMKAQHVFDTLPGKTQQFLLANQVVKMILKIDDIIKMGPGADE</sequence>
<protein>
    <recommendedName>
        <fullName>T-complex protein 1 subunit epsilon</fullName>
        <shortName>TCP-1-epsilon</shortName>
    </recommendedName>
    <alternativeName>
        <fullName>CCT-epsilon</fullName>
    </alternativeName>
</protein>
<evidence type="ECO:0000250" key="1"/>
<evidence type="ECO:0000305" key="2"/>